<proteinExistence type="evidence at protein level"/>
<keyword id="KW-0002">3D-structure</keyword>
<keyword id="KW-0687">Ribonucleoprotein</keyword>
<keyword id="KW-0689">Ribosomal protein</keyword>
<keyword id="KW-0694">RNA-binding</keyword>
<keyword id="KW-0699">rRNA-binding</keyword>
<evidence type="ECO:0000255" key="1">
    <source>
        <dbReference type="HAMAP-Rule" id="MF_01302"/>
    </source>
</evidence>
<evidence type="ECO:0000305" key="2"/>
<comment type="function">
    <text evidence="1">One of the primary rRNA binding proteins, it binds directly to 16S rRNA central domain where it helps coordinate assembly of the platform of the 30S subunit.</text>
</comment>
<comment type="subunit">
    <text evidence="1">Part of the 30S ribosomal subunit. Contacts proteins S5 and S12.</text>
</comment>
<comment type="similarity">
    <text evidence="1">Belongs to the universal ribosomal protein uS8 family.</text>
</comment>
<dbReference type="EMBL" id="AJ938182">
    <property type="protein sequence ID" value="CAI81797.1"/>
    <property type="molecule type" value="Genomic_DNA"/>
</dbReference>
<dbReference type="RefSeq" id="WP_000178881.1">
    <property type="nucleotide sequence ID" value="NC_007622.1"/>
</dbReference>
<dbReference type="PDB" id="6FXC">
    <property type="method" value="EM"/>
    <property type="resolution" value="6.76 A"/>
    <property type="chains" value="Ah/Bh=2-132"/>
</dbReference>
<dbReference type="PDBsum" id="6FXC"/>
<dbReference type="EMDB" id="EMD-3637"/>
<dbReference type="SMR" id="Q2YYL1"/>
<dbReference type="GeneID" id="98346548"/>
<dbReference type="KEGG" id="sab:SAB2108c"/>
<dbReference type="HOGENOM" id="CLU_098428_0_2_9"/>
<dbReference type="GO" id="GO:1990904">
    <property type="term" value="C:ribonucleoprotein complex"/>
    <property type="evidence" value="ECO:0007669"/>
    <property type="project" value="UniProtKB-KW"/>
</dbReference>
<dbReference type="GO" id="GO:0005840">
    <property type="term" value="C:ribosome"/>
    <property type="evidence" value="ECO:0007669"/>
    <property type="project" value="UniProtKB-KW"/>
</dbReference>
<dbReference type="GO" id="GO:0019843">
    <property type="term" value="F:rRNA binding"/>
    <property type="evidence" value="ECO:0007669"/>
    <property type="project" value="UniProtKB-UniRule"/>
</dbReference>
<dbReference type="GO" id="GO:0003735">
    <property type="term" value="F:structural constituent of ribosome"/>
    <property type="evidence" value="ECO:0007669"/>
    <property type="project" value="InterPro"/>
</dbReference>
<dbReference type="GO" id="GO:0006412">
    <property type="term" value="P:translation"/>
    <property type="evidence" value="ECO:0007669"/>
    <property type="project" value="UniProtKB-UniRule"/>
</dbReference>
<dbReference type="FunFam" id="3.30.1370.30:FF:000002">
    <property type="entry name" value="30S ribosomal protein S8"/>
    <property type="match status" value="1"/>
</dbReference>
<dbReference type="FunFam" id="3.30.1490.10:FF:000001">
    <property type="entry name" value="30S ribosomal protein S8"/>
    <property type="match status" value="1"/>
</dbReference>
<dbReference type="Gene3D" id="3.30.1370.30">
    <property type="match status" value="1"/>
</dbReference>
<dbReference type="Gene3D" id="3.30.1490.10">
    <property type="match status" value="1"/>
</dbReference>
<dbReference type="HAMAP" id="MF_01302_B">
    <property type="entry name" value="Ribosomal_uS8_B"/>
    <property type="match status" value="1"/>
</dbReference>
<dbReference type="InterPro" id="IPR000630">
    <property type="entry name" value="Ribosomal_uS8"/>
</dbReference>
<dbReference type="InterPro" id="IPR047863">
    <property type="entry name" value="Ribosomal_uS8_CS"/>
</dbReference>
<dbReference type="InterPro" id="IPR035987">
    <property type="entry name" value="Ribosomal_uS8_sf"/>
</dbReference>
<dbReference type="NCBIfam" id="NF001109">
    <property type="entry name" value="PRK00136.1"/>
    <property type="match status" value="1"/>
</dbReference>
<dbReference type="PANTHER" id="PTHR11758">
    <property type="entry name" value="40S RIBOSOMAL PROTEIN S15A"/>
    <property type="match status" value="1"/>
</dbReference>
<dbReference type="Pfam" id="PF00410">
    <property type="entry name" value="Ribosomal_S8"/>
    <property type="match status" value="1"/>
</dbReference>
<dbReference type="SUPFAM" id="SSF56047">
    <property type="entry name" value="Ribosomal protein S8"/>
    <property type="match status" value="1"/>
</dbReference>
<dbReference type="PROSITE" id="PS00053">
    <property type="entry name" value="RIBOSOMAL_S8"/>
    <property type="match status" value="1"/>
</dbReference>
<feature type="chain" id="PRO_0000228868" description="Small ribosomal subunit protein uS8">
    <location>
        <begin position="1"/>
        <end position="132"/>
    </location>
</feature>
<protein>
    <recommendedName>
        <fullName evidence="1">Small ribosomal subunit protein uS8</fullName>
    </recommendedName>
    <alternativeName>
        <fullName evidence="2">30S ribosomal protein S8</fullName>
    </alternativeName>
</protein>
<reference key="1">
    <citation type="journal article" date="2007" name="PLoS ONE">
        <title>Molecular correlates of host specialization in Staphylococcus aureus.</title>
        <authorList>
            <person name="Herron-Olson L."/>
            <person name="Fitzgerald J.R."/>
            <person name="Musser J.M."/>
            <person name="Kapur V."/>
        </authorList>
    </citation>
    <scope>NUCLEOTIDE SEQUENCE [LARGE SCALE GENOMIC DNA]</scope>
    <source>
        <strain>bovine RF122 / ET3-1</strain>
    </source>
</reference>
<organism>
    <name type="scientific">Staphylococcus aureus (strain bovine RF122 / ET3-1)</name>
    <dbReference type="NCBI Taxonomy" id="273036"/>
    <lineage>
        <taxon>Bacteria</taxon>
        <taxon>Bacillati</taxon>
        <taxon>Bacillota</taxon>
        <taxon>Bacilli</taxon>
        <taxon>Bacillales</taxon>
        <taxon>Staphylococcaceae</taxon>
        <taxon>Staphylococcus</taxon>
    </lineage>
</organism>
<name>RS8_STAAB</name>
<sequence>MTMTDPIADMLTRVRNANMVRHEKLELPASNIKKEIAEILKSEGFIKNVEYVEDDKQGVLRLFLKYGQNDERVITGLKRISKPGLRVYAKASEMPKVLNGLGIALVSTSEGVITDKEARKRNVGGEIIAYVW</sequence>
<gene>
    <name evidence="1" type="primary">rpsH</name>
    <name type="ordered locus">SAB2108c</name>
</gene>
<accession>Q2YYL1</accession>